<feature type="chain" id="PRO_1000205126" description="Probable GTP-binding protein EngB">
    <location>
        <begin position="1"/>
        <end position="211"/>
    </location>
</feature>
<feature type="domain" description="EngB-type G" evidence="1">
    <location>
        <begin position="22"/>
        <end position="195"/>
    </location>
</feature>
<feature type="binding site" evidence="1">
    <location>
        <begin position="30"/>
        <end position="37"/>
    </location>
    <ligand>
        <name>GTP</name>
        <dbReference type="ChEBI" id="CHEBI:37565"/>
    </ligand>
</feature>
<feature type="binding site" evidence="1">
    <location>
        <position position="37"/>
    </location>
    <ligand>
        <name>Mg(2+)</name>
        <dbReference type="ChEBI" id="CHEBI:18420"/>
    </ligand>
</feature>
<feature type="binding site" evidence="1">
    <location>
        <begin position="57"/>
        <end position="61"/>
    </location>
    <ligand>
        <name>GTP</name>
        <dbReference type="ChEBI" id="CHEBI:37565"/>
    </ligand>
</feature>
<feature type="binding site" evidence="1">
    <location>
        <position position="59"/>
    </location>
    <ligand>
        <name>Mg(2+)</name>
        <dbReference type="ChEBI" id="CHEBI:18420"/>
    </ligand>
</feature>
<feature type="binding site" evidence="1">
    <location>
        <begin position="75"/>
        <end position="78"/>
    </location>
    <ligand>
        <name>GTP</name>
        <dbReference type="ChEBI" id="CHEBI:37565"/>
    </ligand>
</feature>
<feature type="binding site" evidence="1">
    <location>
        <begin position="142"/>
        <end position="145"/>
    </location>
    <ligand>
        <name>GTP</name>
        <dbReference type="ChEBI" id="CHEBI:37565"/>
    </ligand>
</feature>
<feature type="binding site" evidence="1">
    <location>
        <begin position="174"/>
        <end position="176"/>
    </location>
    <ligand>
        <name>GTP</name>
        <dbReference type="ChEBI" id="CHEBI:37565"/>
    </ligand>
</feature>
<dbReference type="EMBL" id="CP001104">
    <property type="protein sequence ID" value="ACR72444.1"/>
    <property type="molecule type" value="Genomic_DNA"/>
</dbReference>
<dbReference type="RefSeq" id="WP_012739679.1">
    <property type="nucleotide sequence ID" value="NC_012778.1"/>
</dbReference>
<dbReference type="SMR" id="C4Z1T3"/>
<dbReference type="STRING" id="515620.EUBELI_01451"/>
<dbReference type="GeneID" id="41356152"/>
<dbReference type="KEGG" id="eel:EUBELI_01451"/>
<dbReference type="eggNOG" id="COG0218">
    <property type="taxonomic scope" value="Bacteria"/>
</dbReference>
<dbReference type="HOGENOM" id="CLU_033732_3_0_9"/>
<dbReference type="Proteomes" id="UP000001476">
    <property type="component" value="Chromosome"/>
</dbReference>
<dbReference type="GO" id="GO:0005829">
    <property type="term" value="C:cytosol"/>
    <property type="evidence" value="ECO:0007669"/>
    <property type="project" value="TreeGrafter"/>
</dbReference>
<dbReference type="GO" id="GO:0005525">
    <property type="term" value="F:GTP binding"/>
    <property type="evidence" value="ECO:0007669"/>
    <property type="project" value="UniProtKB-UniRule"/>
</dbReference>
<dbReference type="GO" id="GO:0046872">
    <property type="term" value="F:metal ion binding"/>
    <property type="evidence" value="ECO:0007669"/>
    <property type="project" value="UniProtKB-KW"/>
</dbReference>
<dbReference type="GO" id="GO:0000917">
    <property type="term" value="P:division septum assembly"/>
    <property type="evidence" value="ECO:0007669"/>
    <property type="project" value="UniProtKB-KW"/>
</dbReference>
<dbReference type="CDD" id="cd01876">
    <property type="entry name" value="YihA_EngB"/>
    <property type="match status" value="1"/>
</dbReference>
<dbReference type="FunFam" id="3.40.50.300:FF:000098">
    <property type="entry name" value="Probable GTP-binding protein EngB"/>
    <property type="match status" value="1"/>
</dbReference>
<dbReference type="Gene3D" id="3.40.50.300">
    <property type="entry name" value="P-loop containing nucleotide triphosphate hydrolases"/>
    <property type="match status" value="1"/>
</dbReference>
<dbReference type="HAMAP" id="MF_00321">
    <property type="entry name" value="GTPase_EngB"/>
    <property type="match status" value="1"/>
</dbReference>
<dbReference type="InterPro" id="IPR030393">
    <property type="entry name" value="G_ENGB_dom"/>
</dbReference>
<dbReference type="InterPro" id="IPR006073">
    <property type="entry name" value="GTP-bd"/>
</dbReference>
<dbReference type="InterPro" id="IPR019987">
    <property type="entry name" value="GTP-bd_ribosome_bio_YsxC"/>
</dbReference>
<dbReference type="InterPro" id="IPR027417">
    <property type="entry name" value="P-loop_NTPase"/>
</dbReference>
<dbReference type="NCBIfam" id="TIGR03598">
    <property type="entry name" value="GTPase_YsxC"/>
    <property type="match status" value="1"/>
</dbReference>
<dbReference type="PANTHER" id="PTHR11649:SF13">
    <property type="entry name" value="ENGB-TYPE G DOMAIN-CONTAINING PROTEIN"/>
    <property type="match status" value="1"/>
</dbReference>
<dbReference type="PANTHER" id="PTHR11649">
    <property type="entry name" value="MSS1/TRME-RELATED GTP-BINDING PROTEIN"/>
    <property type="match status" value="1"/>
</dbReference>
<dbReference type="Pfam" id="PF01926">
    <property type="entry name" value="MMR_HSR1"/>
    <property type="match status" value="1"/>
</dbReference>
<dbReference type="SUPFAM" id="SSF52540">
    <property type="entry name" value="P-loop containing nucleoside triphosphate hydrolases"/>
    <property type="match status" value="1"/>
</dbReference>
<dbReference type="PROSITE" id="PS51706">
    <property type="entry name" value="G_ENGB"/>
    <property type="match status" value="1"/>
</dbReference>
<comment type="function">
    <text evidence="1">Necessary for normal cell division and for the maintenance of normal septation.</text>
</comment>
<comment type="cofactor">
    <cofactor evidence="1">
        <name>Mg(2+)</name>
        <dbReference type="ChEBI" id="CHEBI:18420"/>
    </cofactor>
</comment>
<comment type="similarity">
    <text evidence="1">Belongs to the TRAFAC class TrmE-Era-EngA-EngB-Septin-like GTPase superfamily. EngB GTPase family.</text>
</comment>
<evidence type="ECO:0000255" key="1">
    <source>
        <dbReference type="HAMAP-Rule" id="MF_00321"/>
    </source>
</evidence>
<proteinExistence type="inferred from homology"/>
<sequence length="211" mass="23817">MVIKKVNLDIVVGVTSTLPETPFPEVAFAGKSNVGKSSLINALMNRKSYARTSSQPGKTQTINFYNINDSMYLVDLPGYGYANVSPAVKAKWGKMIEKYLRKSSQLKQVFLLIDIRHDPSDNDRMMYDWIVNNGYRPVIVATKLDKIKRSQISKQVKAVRTGLGLRQEDILIPFSSQTKQGLKELWQLIDSYVLPQEENETDSESAAIIQE</sequence>
<reference key="1">
    <citation type="journal article" date="2009" name="Proc. Natl. Acad. Sci. U.S.A.">
        <title>Characterizing a model human gut microbiota composed of members of its two dominant bacterial phyla.</title>
        <authorList>
            <person name="Mahowald M.A."/>
            <person name="Rey F.E."/>
            <person name="Seedorf H."/>
            <person name="Turnbaugh P.J."/>
            <person name="Fulton R.S."/>
            <person name="Wollam A."/>
            <person name="Shah N."/>
            <person name="Wang C."/>
            <person name="Magrini V."/>
            <person name="Wilson R.K."/>
            <person name="Cantarel B.L."/>
            <person name="Coutinho P.M."/>
            <person name="Henrissat B."/>
            <person name="Crock L.W."/>
            <person name="Russell A."/>
            <person name="Verberkmoes N.C."/>
            <person name="Hettich R.L."/>
            <person name="Gordon J.I."/>
        </authorList>
    </citation>
    <scope>NUCLEOTIDE SEQUENCE [LARGE SCALE GENOMIC DNA]</scope>
    <source>
        <strain>ATCC 27750 / DSM 3376 / VPI C15-48 / C15-B4</strain>
    </source>
</reference>
<accession>C4Z1T3</accession>
<name>ENGB_LACE2</name>
<keyword id="KW-0131">Cell cycle</keyword>
<keyword id="KW-0132">Cell division</keyword>
<keyword id="KW-0342">GTP-binding</keyword>
<keyword id="KW-0460">Magnesium</keyword>
<keyword id="KW-0479">Metal-binding</keyword>
<keyword id="KW-0547">Nucleotide-binding</keyword>
<keyword id="KW-1185">Reference proteome</keyword>
<keyword id="KW-0717">Septation</keyword>
<organism>
    <name type="scientific">Lachnospira eligens (strain ATCC 27750 / DSM 3376 / VPI C15-48 / C15-B4)</name>
    <name type="common">Eubacterium eligens</name>
    <dbReference type="NCBI Taxonomy" id="515620"/>
    <lineage>
        <taxon>Bacteria</taxon>
        <taxon>Bacillati</taxon>
        <taxon>Bacillota</taxon>
        <taxon>Clostridia</taxon>
        <taxon>Lachnospirales</taxon>
        <taxon>Lachnospiraceae</taxon>
        <taxon>Lachnospira</taxon>
    </lineage>
</organism>
<gene>
    <name evidence="1" type="primary">engB</name>
    <name type="ordered locus">EUBELI_01451</name>
</gene>
<protein>
    <recommendedName>
        <fullName evidence="1">Probable GTP-binding protein EngB</fullName>
    </recommendedName>
</protein>